<accession>P14541</accession>
<organism>
    <name type="scientific">Naja kaouthia</name>
    <name type="common">Monocled cobra</name>
    <name type="synonym">Naja siamensis</name>
    <dbReference type="NCBI Taxonomy" id="8649"/>
    <lineage>
        <taxon>Eukaryota</taxon>
        <taxon>Metazoa</taxon>
        <taxon>Chordata</taxon>
        <taxon>Craniata</taxon>
        <taxon>Vertebrata</taxon>
        <taxon>Euteleostomi</taxon>
        <taxon>Lepidosauria</taxon>
        <taxon>Squamata</taxon>
        <taxon>Bifurcata</taxon>
        <taxon>Unidentata</taxon>
        <taxon>Episquamata</taxon>
        <taxon>Toxicofera</taxon>
        <taxon>Serpentes</taxon>
        <taxon>Colubroidea</taxon>
        <taxon>Elapidae</taxon>
        <taxon>Elapinae</taxon>
        <taxon>Naja</taxon>
    </lineage>
</organism>
<protein>
    <recommendedName>
        <fullName>Cytotoxin homolog</fullName>
    </recommendedName>
    <alternativeName>
        <fullName evidence="4">Cytotoxin-like basic protein</fullName>
        <shortName evidence="4">CLBP</shortName>
    </alternativeName>
</protein>
<dbReference type="PIR" id="A27025">
    <property type="entry name" value="A27025"/>
</dbReference>
<dbReference type="SMR" id="P14541"/>
<dbReference type="GO" id="GO:0005576">
    <property type="term" value="C:extracellular region"/>
    <property type="evidence" value="ECO:0007669"/>
    <property type="project" value="UniProtKB-SubCell"/>
</dbReference>
<dbReference type="GO" id="GO:0016020">
    <property type="term" value="C:membrane"/>
    <property type="evidence" value="ECO:0007669"/>
    <property type="project" value="UniProtKB-KW"/>
</dbReference>
<dbReference type="GO" id="GO:0044218">
    <property type="term" value="C:other organism cell membrane"/>
    <property type="evidence" value="ECO:0007669"/>
    <property type="project" value="UniProtKB-KW"/>
</dbReference>
<dbReference type="GO" id="GO:0090729">
    <property type="term" value="F:toxin activity"/>
    <property type="evidence" value="ECO:0007669"/>
    <property type="project" value="UniProtKB-KW"/>
</dbReference>
<dbReference type="CDD" id="cd00206">
    <property type="entry name" value="TFP_snake_toxin"/>
    <property type="match status" value="1"/>
</dbReference>
<dbReference type="FunFam" id="2.10.60.10:FF:000024">
    <property type="entry name" value="Cytotoxin 1"/>
    <property type="match status" value="1"/>
</dbReference>
<dbReference type="Gene3D" id="2.10.60.10">
    <property type="entry name" value="CD59"/>
    <property type="match status" value="1"/>
</dbReference>
<dbReference type="InterPro" id="IPR003572">
    <property type="entry name" value="Cytotoxin_Cobra"/>
</dbReference>
<dbReference type="InterPro" id="IPR003571">
    <property type="entry name" value="Snake_3FTx"/>
</dbReference>
<dbReference type="InterPro" id="IPR045860">
    <property type="entry name" value="Snake_toxin-like_sf"/>
</dbReference>
<dbReference type="InterPro" id="IPR018354">
    <property type="entry name" value="Snake_toxin_con_site"/>
</dbReference>
<dbReference type="InterPro" id="IPR054131">
    <property type="entry name" value="Toxin_cobra-type"/>
</dbReference>
<dbReference type="Pfam" id="PF21947">
    <property type="entry name" value="Toxin_cobra-type"/>
    <property type="match status" value="1"/>
</dbReference>
<dbReference type="PRINTS" id="PR00282">
    <property type="entry name" value="CYTOTOXIN"/>
</dbReference>
<dbReference type="SUPFAM" id="SSF57302">
    <property type="entry name" value="Snake toxin-like"/>
    <property type="match status" value="1"/>
</dbReference>
<dbReference type="PROSITE" id="PS00272">
    <property type="entry name" value="SNAKE_TOXIN"/>
    <property type="match status" value="1"/>
</dbReference>
<proteinExistence type="evidence at protein level"/>
<sequence length="62" mass="6994">LKCHNTQLPFIYKTCPEGKNLCFKATLKKFPLKIPIKRGCADNCPKNSALLKYVCCSTDKCN</sequence>
<feature type="chain" id="PRO_0000093526" description="Cytotoxin homolog" evidence="3">
    <location>
        <begin position="1"/>
        <end position="62"/>
    </location>
</feature>
<feature type="disulfide bond" evidence="1">
    <location>
        <begin position="3"/>
        <end position="22"/>
    </location>
</feature>
<feature type="disulfide bond" evidence="1">
    <location>
        <begin position="15"/>
        <end position="40"/>
    </location>
</feature>
<feature type="disulfide bond" evidence="1">
    <location>
        <begin position="44"/>
        <end position="55"/>
    </location>
</feature>
<feature type="disulfide bond" evidence="1">
    <location>
        <begin position="56"/>
        <end position="61"/>
    </location>
</feature>
<evidence type="ECO:0000250" key="1">
    <source>
        <dbReference type="UniProtKB" id="P60301"/>
    </source>
</evidence>
<evidence type="ECO:0000250" key="2">
    <source>
        <dbReference type="UniProtKB" id="P62375"/>
    </source>
</evidence>
<evidence type="ECO:0000269" key="3">
    <source>
    </source>
</evidence>
<evidence type="ECO:0000303" key="4">
    <source>
    </source>
</evidence>
<evidence type="ECO:0000305" key="5"/>
<reference key="1">
    <citation type="journal article" date="1987" name="FEBS Lett.">
        <title>Amino acid sequence of a cytotoxin-like basic protein with low cytotoxic activity from the venom of the Thailand cobra Naja naja siamensis.</title>
        <authorList>
            <person name="Inoue S."/>
            <person name="Ohkura K."/>
            <person name="Ikeda K."/>
            <person name="Hayashi K."/>
        </authorList>
    </citation>
    <scope>PROTEIN SEQUENCE</scope>
    <scope>SUBCELLULAR LOCATION</scope>
    <source>
        <tissue>Venom</tissue>
    </source>
</reference>
<comment type="function">
    <text evidence="3">Has low cytotoxic activity.</text>
</comment>
<comment type="subcellular location">
    <subcellularLocation>
        <location evidence="3">Secreted</location>
    </subcellularLocation>
    <subcellularLocation>
        <location evidence="2">Target cell membrane</location>
    </subcellularLocation>
</comment>
<comment type="tissue specificity">
    <text evidence="5">Expressed by the venom gland.</text>
</comment>
<comment type="miscellaneous">
    <text evidence="5">Is classified as a P-type cytotoxin, since a proline residue stands at position 31 (Pro-31 in standard classification).</text>
</comment>
<comment type="similarity">
    <text evidence="5">Belongs to the three-finger toxin family. Short-chain subfamily. Orphan group XV sub-subfamily.</text>
</comment>
<keyword id="KW-0903">Direct protein sequencing</keyword>
<keyword id="KW-1015">Disulfide bond</keyword>
<keyword id="KW-0472">Membrane</keyword>
<keyword id="KW-0964">Secreted</keyword>
<keyword id="KW-1052">Target cell membrane</keyword>
<keyword id="KW-1053">Target membrane</keyword>
<keyword id="KW-0800">Toxin</keyword>
<name>3SOFH_NAJKA</name>